<proteinExistence type="inferred from homology"/>
<organism>
    <name type="scientific">Campylobacter jejuni subsp. jejuni serotype O:6 (strain 81116 / NCTC 11828)</name>
    <dbReference type="NCBI Taxonomy" id="407148"/>
    <lineage>
        <taxon>Bacteria</taxon>
        <taxon>Pseudomonadati</taxon>
        <taxon>Campylobacterota</taxon>
        <taxon>Epsilonproteobacteria</taxon>
        <taxon>Campylobacterales</taxon>
        <taxon>Campylobacteraceae</taxon>
        <taxon>Campylobacter</taxon>
    </lineage>
</organism>
<comment type="catalytic activity">
    <reaction evidence="1">
        <text>L-citrulline + L-aspartate + ATP = 2-(N(omega)-L-arginino)succinate + AMP + diphosphate + H(+)</text>
        <dbReference type="Rhea" id="RHEA:10932"/>
        <dbReference type="ChEBI" id="CHEBI:15378"/>
        <dbReference type="ChEBI" id="CHEBI:29991"/>
        <dbReference type="ChEBI" id="CHEBI:30616"/>
        <dbReference type="ChEBI" id="CHEBI:33019"/>
        <dbReference type="ChEBI" id="CHEBI:57472"/>
        <dbReference type="ChEBI" id="CHEBI:57743"/>
        <dbReference type="ChEBI" id="CHEBI:456215"/>
        <dbReference type="EC" id="6.3.4.5"/>
    </reaction>
</comment>
<comment type="pathway">
    <text evidence="1">Amino-acid biosynthesis; L-arginine biosynthesis; L-arginine from L-ornithine and carbamoyl phosphate: step 2/3.</text>
</comment>
<comment type="subunit">
    <text evidence="1">Homotetramer.</text>
</comment>
<comment type="subcellular location">
    <subcellularLocation>
        <location evidence="1">Cytoplasm</location>
    </subcellularLocation>
</comment>
<comment type="similarity">
    <text evidence="1">Belongs to the argininosuccinate synthase family. Type 1 subfamily.</text>
</comment>
<protein>
    <recommendedName>
        <fullName evidence="1">Argininosuccinate synthase</fullName>
        <ecNumber evidence="1">6.3.4.5</ecNumber>
    </recommendedName>
    <alternativeName>
        <fullName evidence="1">Citrulline--aspartate ligase</fullName>
    </alternativeName>
</protein>
<name>ASSY_CAMJ8</name>
<gene>
    <name evidence="1" type="primary">argG</name>
    <name type="ordered locus">C8J_0621</name>
</gene>
<keyword id="KW-0028">Amino-acid biosynthesis</keyword>
<keyword id="KW-0055">Arginine biosynthesis</keyword>
<keyword id="KW-0067">ATP-binding</keyword>
<keyword id="KW-0963">Cytoplasm</keyword>
<keyword id="KW-0436">Ligase</keyword>
<keyword id="KW-0547">Nucleotide-binding</keyword>
<accession>A8FL83</accession>
<feature type="chain" id="PRO_1000070913" description="Argininosuccinate synthase">
    <location>
        <begin position="1"/>
        <end position="406"/>
    </location>
</feature>
<feature type="binding site" evidence="1">
    <location>
        <begin position="11"/>
        <end position="19"/>
    </location>
    <ligand>
        <name>ATP</name>
        <dbReference type="ChEBI" id="CHEBI:30616"/>
    </ligand>
</feature>
<feature type="binding site" evidence="1">
    <location>
        <position position="38"/>
    </location>
    <ligand>
        <name>ATP</name>
        <dbReference type="ChEBI" id="CHEBI:30616"/>
    </ligand>
</feature>
<feature type="binding site" evidence="1">
    <location>
        <position position="91"/>
    </location>
    <ligand>
        <name>L-citrulline</name>
        <dbReference type="ChEBI" id="CHEBI:57743"/>
    </ligand>
</feature>
<feature type="binding site" evidence="1">
    <location>
        <position position="96"/>
    </location>
    <ligand>
        <name>L-citrulline</name>
        <dbReference type="ChEBI" id="CHEBI:57743"/>
    </ligand>
</feature>
<feature type="binding site" evidence="1">
    <location>
        <position position="121"/>
    </location>
    <ligand>
        <name>ATP</name>
        <dbReference type="ChEBI" id="CHEBI:30616"/>
    </ligand>
</feature>
<feature type="binding site" evidence="1">
    <location>
        <position position="123"/>
    </location>
    <ligand>
        <name>L-aspartate</name>
        <dbReference type="ChEBI" id="CHEBI:29991"/>
    </ligand>
</feature>
<feature type="binding site" evidence="1">
    <location>
        <position position="127"/>
    </location>
    <ligand>
        <name>L-aspartate</name>
        <dbReference type="ChEBI" id="CHEBI:29991"/>
    </ligand>
</feature>
<feature type="binding site" evidence="1">
    <location>
        <position position="127"/>
    </location>
    <ligand>
        <name>L-citrulline</name>
        <dbReference type="ChEBI" id="CHEBI:57743"/>
    </ligand>
</feature>
<feature type="binding site" evidence="1">
    <location>
        <position position="128"/>
    </location>
    <ligand>
        <name>L-aspartate</name>
        <dbReference type="ChEBI" id="CHEBI:29991"/>
    </ligand>
</feature>
<feature type="binding site" evidence="1">
    <location>
        <position position="131"/>
    </location>
    <ligand>
        <name>L-citrulline</name>
        <dbReference type="ChEBI" id="CHEBI:57743"/>
    </ligand>
</feature>
<feature type="binding site" evidence="1">
    <location>
        <position position="181"/>
    </location>
    <ligand>
        <name>L-citrulline</name>
        <dbReference type="ChEBI" id="CHEBI:57743"/>
    </ligand>
</feature>
<feature type="binding site" evidence="1">
    <location>
        <position position="190"/>
    </location>
    <ligand>
        <name>L-citrulline</name>
        <dbReference type="ChEBI" id="CHEBI:57743"/>
    </ligand>
</feature>
<feature type="binding site" evidence="1">
    <location>
        <position position="266"/>
    </location>
    <ligand>
        <name>L-citrulline</name>
        <dbReference type="ChEBI" id="CHEBI:57743"/>
    </ligand>
</feature>
<feature type="binding site" evidence="1">
    <location>
        <position position="278"/>
    </location>
    <ligand>
        <name>L-citrulline</name>
        <dbReference type="ChEBI" id="CHEBI:57743"/>
    </ligand>
</feature>
<dbReference type="EC" id="6.3.4.5" evidence="1"/>
<dbReference type="EMBL" id="CP000814">
    <property type="protein sequence ID" value="ABV52220.1"/>
    <property type="molecule type" value="Genomic_DNA"/>
</dbReference>
<dbReference type="RefSeq" id="WP_002866519.1">
    <property type="nucleotide sequence ID" value="NC_009839.1"/>
</dbReference>
<dbReference type="SMR" id="A8FL83"/>
<dbReference type="KEGG" id="cju:C8J_0621"/>
<dbReference type="HOGENOM" id="CLU_032784_4_2_7"/>
<dbReference type="UniPathway" id="UPA00068">
    <property type="reaction ID" value="UER00113"/>
</dbReference>
<dbReference type="GO" id="GO:0005737">
    <property type="term" value="C:cytoplasm"/>
    <property type="evidence" value="ECO:0007669"/>
    <property type="project" value="UniProtKB-SubCell"/>
</dbReference>
<dbReference type="GO" id="GO:0004055">
    <property type="term" value="F:argininosuccinate synthase activity"/>
    <property type="evidence" value="ECO:0007669"/>
    <property type="project" value="UniProtKB-UniRule"/>
</dbReference>
<dbReference type="GO" id="GO:0005524">
    <property type="term" value="F:ATP binding"/>
    <property type="evidence" value="ECO:0007669"/>
    <property type="project" value="UniProtKB-UniRule"/>
</dbReference>
<dbReference type="GO" id="GO:0000053">
    <property type="term" value="P:argininosuccinate metabolic process"/>
    <property type="evidence" value="ECO:0007669"/>
    <property type="project" value="TreeGrafter"/>
</dbReference>
<dbReference type="GO" id="GO:0006526">
    <property type="term" value="P:L-arginine biosynthetic process"/>
    <property type="evidence" value="ECO:0007669"/>
    <property type="project" value="UniProtKB-UniRule"/>
</dbReference>
<dbReference type="GO" id="GO:0000050">
    <property type="term" value="P:urea cycle"/>
    <property type="evidence" value="ECO:0007669"/>
    <property type="project" value="TreeGrafter"/>
</dbReference>
<dbReference type="CDD" id="cd01999">
    <property type="entry name" value="ASS"/>
    <property type="match status" value="1"/>
</dbReference>
<dbReference type="FunFam" id="3.40.50.620:FF:000019">
    <property type="entry name" value="Argininosuccinate synthase"/>
    <property type="match status" value="1"/>
</dbReference>
<dbReference type="FunFam" id="3.90.1260.10:FF:000007">
    <property type="entry name" value="Argininosuccinate synthase"/>
    <property type="match status" value="1"/>
</dbReference>
<dbReference type="Gene3D" id="3.90.1260.10">
    <property type="entry name" value="Argininosuccinate synthetase, chain A, domain 2"/>
    <property type="match status" value="1"/>
</dbReference>
<dbReference type="Gene3D" id="3.40.50.620">
    <property type="entry name" value="HUPs"/>
    <property type="match status" value="1"/>
</dbReference>
<dbReference type="Gene3D" id="1.20.5.470">
    <property type="entry name" value="Single helix bin"/>
    <property type="match status" value="1"/>
</dbReference>
<dbReference type="HAMAP" id="MF_00005">
    <property type="entry name" value="Arg_succ_synth_type1"/>
    <property type="match status" value="1"/>
</dbReference>
<dbReference type="InterPro" id="IPR048268">
    <property type="entry name" value="Arginosuc_syn_C"/>
</dbReference>
<dbReference type="InterPro" id="IPR048267">
    <property type="entry name" value="Arginosuc_syn_N"/>
</dbReference>
<dbReference type="InterPro" id="IPR001518">
    <property type="entry name" value="Arginosuc_synth"/>
</dbReference>
<dbReference type="InterPro" id="IPR018223">
    <property type="entry name" value="Arginosuc_synth_CS"/>
</dbReference>
<dbReference type="InterPro" id="IPR023434">
    <property type="entry name" value="Arginosuc_synth_type_1_subfam"/>
</dbReference>
<dbReference type="InterPro" id="IPR024074">
    <property type="entry name" value="AS_cat/multimer_dom_body"/>
</dbReference>
<dbReference type="InterPro" id="IPR014729">
    <property type="entry name" value="Rossmann-like_a/b/a_fold"/>
</dbReference>
<dbReference type="NCBIfam" id="TIGR00032">
    <property type="entry name" value="argG"/>
    <property type="match status" value="1"/>
</dbReference>
<dbReference type="NCBIfam" id="NF001770">
    <property type="entry name" value="PRK00509.1"/>
    <property type="match status" value="1"/>
</dbReference>
<dbReference type="PANTHER" id="PTHR11587">
    <property type="entry name" value="ARGININOSUCCINATE SYNTHASE"/>
    <property type="match status" value="1"/>
</dbReference>
<dbReference type="PANTHER" id="PTHR11587:SF2">
    <property type="entry name" value="ARGININOSUCCINATE SYNTHASE"/>
    <property type="match status" value="1"/>
</dbReference>
<dbReference type="Pfam" id="PF20979">
    <property type="entry name" value="Arginosuc_syn_C"/>
    <property type="match status" value="1"/>
</dbReference>
<dbReference type="Pfam" id="PF00764">
    <property type="entry name" value="Arginosuc_synth"/>
    <property type="match status" value="1"/>
</dbReference>
<dbReference type="SUPFAM" id="SSF52402">
    <property type="entry name" value="Adenine nucleotide alpha hydrolases-like"/>
    <property type="match status" value="1"/>
</dbReference>
<dbReference type="SUPFAM" id="SSF69864">
    <property type="entry name" value="Argininosuccinate synthetase, C-terminal domain"/>
    <property type="match status" value="1"/>
</dbReference>
<dbReference type="PROSITE" id="PS00564">
    <property type="entry name" value="ARGININOSUCCIN_SYN_1"/>
    <property type="match status" value="1"/>
</dbReference>
<dbReference type="PROSITE" id="PS00565">
    <property type="entry name" value="ARGININOSUCCIN_SYN_2"/>
    <property type="match status" value="1"/>
</dbReference>
<evidence type="ECO:0000255" key="1">
    <source>
        <dbReference type="HAMAP-Rule" id="MF_00005"/>
    </source>
</evidence>
<sequence length="406" mass="45619">MKNEVKKVVLAYSGGLDTSIILKWLQDEYNCEVVTFTADIGQGEELEPARKKALSLGIKEENIFIKDLRDEFVKDYVFPMFRANAIYEGEYLLGTSIARPLIAKTQAQIALQTGADAVSHGATGKGNDQVRFELGYLAFNPDLKIIAPWREWDLNSREKLLAYAQKHGIDISKKKGKSPYSMDANLLHISYEGLVLEDPAHAPEEDMWRWSKSPKDAPNESEIIELDFQKGDLVAINGEKLSPAGLLTKLNELGCKHGIGRLDIVENRYVGMKSRGCYETPGGTILLKAHRALESITLDREAAHLKDELMPKYASLIYNGYWFSPERMMLQALIDESQIHANGRVKLELYKGNVMIIGRESANDSLFNAAYCTFEEDEVYNQKDAAGFIKLNALRFIIAGKNGRKF</sequence>
<reference key="1">
    <citation type="journal article" date="2007" name="J. Bacteriol.">
        <title>The complete genome sequence of Campylobacter jejuni strain 81116 (NCTC11828).</title>
        <authorList>
            <person name="Pearson B.M."/>
            <person name="Gaskin D.J.H."/>
            <person name="Segers R.P.A.M."/>
            <person name="Wells J.M."/>
            <person name="Nuijten P.J.M."/>
            <person name="van Vliet A.H.M."/>
        </authorList>
    </citation>
    <scope>NUCLEOTIDE SEQUENCE [LARGE SCALE GENOMIC DNA]</scope>
    <source>
        <strain>81116 / NCTC 11828</strain>
    </source>
</reference>